<sequence length="247" mass="25436">MRILVSNDDGYFAPGIAALAAALGELGDVTVVAPERDRSGASNSLTLDRPLSLRRAANGFFFVNGTPTDCVHLAVTGMLDQLPDMVVSGVNHGANMGDDTLYSGTVAAATEGYLLGIPSIAVSLASWSATDFSVAAQVARDVAARLMRSPLPAPVLLNVNVPDCAGGAPKGTRVTRLGKRHKAEPVIRSQTPRGETVYWVGAAGAAADAGEGTDFHAVANGFVSVTPLQVDLTHTGQIAAVDTWLSA</sequence>
<dbReference type="EC" id="3.1.3.5" evidence="1"/>
<dbReference type="EMBL" id="AM406670">
    <property type="protein sequence ID" value="CAL93704.1"/>
    <property type="molecule type" value="Genomic_DNA"/>
</dbReference>
<dbReference type="RefSeq" id="WP_011764821.1">
    <property type="nucleotide sequence ID" value="NC_008702.1"/>
</dbReference>
<dbReference type="SMR" id="A1K4E9"/>
<dbReference type="STRING" id="62928.azo1087"/>
<dbReference type="KEGG" id="aoa:dqs_1197"/>
<dbReference type="KEGG" id="azo:azo1087"/>
<dbReference type="eggNOG" id="COG0496">
    <property type="taxonomic scope" value="Bacteria"/>
</dbReference>
<dbReference type="HOGENOM" id="CLU_045192_1_2_4"/>
<dbReference type="OrthoDB" id="9780815at2"/>
<dbReference type="Proteomes" id="UP000002588">
    <property type="component" value="Chromosome"/>
</dbReference>
<dbReference type="GO" id="GO:0005737">
    <property type="term" value="C:cytoplasm"/>
    <property type="evidence" value="ECO:0007669"/>
    <property type="project" value="UniProtKB-SubCell"/>
</dbReference>
<dbReference type="GO" id="GO:0008254">
    <property type="term" value="F:3'-nucleotidase activity"/>
    <property type="evidence" value="ECO:0007669"/>
    <property type="project" value="TreeGrafter"/>
</dbReference>
<dbReference type="GO" id="GO:0008253">
    <property type="term" value="F:5'-nucleotidase activity"/>
    <property type="evidence" value="ECO:0007669"/>
    <property type="project" value="UniProtKB-UniRule"/>
</dbReference>
<dbReference type="GO" id="GO:0004309">
    <property type="term" value="F:exopolyphosphatase activity"/>
    <property type="evidence" value="ECO:0007669"/>
    <property type="project" value="TreeGrafter"/>
</dbReference>
<dbReference type="GO" id="GO:0046872">
    <property type="term" value="F:metal ion binding"/>
    <property type="evidence" value="ECO:0007669"/>
    <property type="project" value="UniProtKB-UniRule"/>
</dbReference>
<dbReference type="GO" id="GO:0000166">
    <property type="term" value="F:nucleotide binding"/>
    <property type="evidence" value="ECO:0007669"/>
    <property type="project" value="UniProtKB-KW"/>
</dbReference>
<dbReference type="FunFam" id="3.40.1210.10:FF:000001">
    <property type="entry name" value="5'/3'-nucleotidase SurE"/>
    <property type="match status" value="1"/>
</dbReference>
<dbReference type="Gene3D" id="3.40.1210.10">
    <property type="entry name" value="Survival protein SurE-like phosphatase/nucleotidase"/>
    <property type="match status" value="1"/>
</dbReference>
<dbReference type="HAMAP" id="MF_00060">
    <property type="entry name" value="SurE"/>
    <property type="match status" value="1"/>
</dbReference>
<dbReference type="InterPro" id="IPR030048">
    <property type="entry name" value="SurE"/>
</dbReference>
<dbReference type="InterPro" id="IPR002828">
    <property type="entry name" value="SurE-like_Pase/nucleotidase"/>
</dbReference>
<dbReference type="InterPro" id="IPR036523">
    <property type="entry name" value="SurE-like_sf"/>
</dbReference>
<dbReference type="NCBIfam" id="NF001489">
    <property type="entry name" value="PRK00346.1-3"/>
    <property type="match status" value="1"/>
</dbReference>
<dbReference type="NCBIfam" id="NF001490">
    <property type="entry name" value="PRK00346.1-4"/>
    <property type="match status" value="1"/>
</dbReference>
<dbReference type="NCBIfam" id="TIGR00087">
    <property type="entry name" value="surE"/>
    <property type="match status" value="1"/>
</dbReference>
<dbReference type="PANTHER" id="PTHR30457">
    <property type="entry name" value="5'-NUCLEOTIDASE SURE"/>
    <property type="match status" value="1"/>
</dbReference>
<dbReference type="PANTHER" id="PTHR30457:SF12">
    <property type="entry name" value="5'_3'-NUCLEOTIDASE SURE"/>
    <property type="match status" value="1"/>
</dbReference>
<dbReference type="Pfam" id="PF01975">
    <property type="entry name" value="SurE"/>
    <property type="match status" value="1"/>
</dbReference>
<dbReference type="SUPFAM" id="SSF64167">
    <property type="entry name" value="SurE-like"/>
    <property type="match status" value="1"/>
</dbReference>
<comment type="function">
    <text evidence="1">Nucleotidase that shows phosphatase activity on nucleoside 5'-monophosphates.</text>
</comment>
<comment type="catalytic activity">
    <reaction evidence="1">
        <text>a ribonucleoside 5'-phosphate + H2O = a ribonucleoside + phosphate</text>
        <dbReference type="Rhea" id="RHEA:12484"/>
        <dbReference type="ChEBI" id="CHEBI:15377"/>
        <dbReference type="ChEBI" id="CHEBI:18254"/>
        <dbReference type="ChEBI" id="CHEBI:43474"/>
        <dbReference type="ChEBI" id="CHEBI:58043"/>
        <dbReference type="EC" id="3.1.3.5"/>
    </reaction>
</comment>
<comment type="cofactor">
    <cofactor evidence="1">
        <name>a divalent metal cation</name>
        <dbReference type="ChEBI" id="CHEBI:60240"/>
    </cofactor>
    <text evidence="1">Binds 1 divalent metal cation per subunit.</text>
</comment>
<comment type="subcellular location">
    <subcellularLocation>
        <location evidence="1">Cytoplasm</location>
    </subcellularLocation>
</comment>
<comment type="similarity">
    <text evidence="1">Belongs to the SurE nucleotidase family.</text>
</comment>
<reference key="1">
    <citation type="journal article" date="2006" name="Nat. Biotechnol.">
        <title>Complete genome of the mutualistic, N2-fixing grass endophyte Azoarcus sp. strain BH72.</title>
        <authorList>
            <person name="Krause A."/>
            <person name="Ramakumar A."/>
            <person name="Bartels D."/>
            <person name="Battistoni F."/>
            <person name="Bekel T."/>
            <person name="Boch J."/>
            <person name="Boehm M."/>
            <person name="Friedrich F."/>
            <person name="Hurek T."/>
            <person name="Krause L."/>
            <person name="Linke B."/>
            <person name="McHardy A.C."/>
            <person name="Sarkar A."/>
            <person name="Schneiker S."/>
            <person name="Syed A.A."/>
            <person name="Thauer R."/>
            <person name="Vorhoelter F.-J."/>
            <person name="Weidner S."/>
            <person name="Puehler A."/>
            <person name="Reinhold-Hurek B."/>
            <person name="Kaiser O."/>
            <person name="Goesmann A."/>
        </authorList>
    </citation>
    <scope>NUCLEOTIDE SEQUENCE [LARGE SCALE GENOMIC DNA]</scope>
    <source>
        <strain>BH72</strain>
    </source>
</reference>
<feature type="chain" id="PRO_1000007702" description="5'-nucleotidase SurE">
    <location>
        <begin position="1"/>
        <end position="247"/>
    </location>
</feature>
<feature type="binding site" evidence="1">
    <location>
        <position position="8"/>
    </location>
    <ligand>
        <name>a divalent metal cation</name>
        <dbReference type="ChEBI" id="CHEBI:60240"/>
    </ligand>
</feature>
<feature type="binding site" evidence="1">
    <location>
        <position position="9"/>
    </location>
    <ligand>
        <name>a divalent metal cation</name>
        <dbReference type="ChEBI" id="CHEBI:60240"/>
    </ligand>
</feature>
<feature type="binding site" evidence="1">
    <location>
        <position position="39"/>
    </location>
    <ligand>
        <name>a divalent metal cation</name>
        <dbReference type="ChEBI" id="CHEBI:60240"/>
    </ligand>
</feature>
<feature type="binding site" evidence="1">
    <location>
        <position position="91"/>
    </location>
    <ligand>
        <name>a divalent metal cation</name>
        <dbReference type="ChEBI" id="CHEBI:60240"/>
    </ligand>
</feature>
<proteinExistence type="inferred from homology"/>
<name>SURE_AZOSB</name>
<keyword id="KW-0963">Cytoplasm</keyword>
<keyword id="KW-0378">Hydrolase</keyword>
<keyword id="KW-0479">Metal-binding</keyword>
<keyword id="KW-0547">Nucleotide-binding</keyword>
<keyword id="KW-1185">Reference proteome</keyword>
<gene>
    <name evidence="1" type="primary">surE</name>
    <name type="ordered locus">azo1087</name>
</gene>
<accession>A1K4E9</accession>
<protein>
    <recommendedName>
        <fullName evidence="1">5'-nucleotidase SurE</fullName>
        <ecNumber evidence="1">3.1.3.5</ecNumber>
    </recommendedName>
    <alternativeName>
        <fullName evidence="1">Nucleoside 5'-monophosphate phosphohydrolase</fullName>
    </alternativeName>
</protein>
<evidence type="ECO:0000255" key="1">
    <source>
        <dbReference type="HAMAP-Rule" id="MF_00060"/>
    </source>
</evidence>
<organism>
    <name type="scientific">Azoarcus sp. (strain BH72)</name>
    <dbReference type="NCBI Taxonomy" id="418699"/>
    <lineage>
        <taxon>Bacteria</taxon>
        <taxon>Pseudomonadati</taxon>
        <taxon>Pseudomonadota</taxon>
        <taxon>Betaproteobacteria</taxon>
        <taxon>Rhodocyclales</taxon>
        <taxon>Zoogloeaceae</taxon>
        <taxon>Azoarcus</taxon>
    </lineage>
</organism>